<sequence length="417" mass="47596">MAEYKNYTLNFGPVHPAAHGVLRLILELDGENVVRADPHVGLLHRGTEKLAEFKPYNQSIGYMDRLDYVSMMCNEHAYVMAIEKLLQLEVPERAKYIRVMFAEMTRILNHLLWVAACGIDLGAMTVFLYAFRVREDLFDCYEAVSGARMHAAYFRPGGVARDLPTQMPQYQKTRFTSKRKAKKLNEPRQGSMLDFLDHFVVDFEKSLDEIDTLLTDNRLWKQRTVDIGTVTAERAKELGFTGPMLRGSGVAWDLRKTQPYEVYHKLEFDIPIGANGDCYDRYLVRMAEMRESNKLIKQCVDWLRANPGPVLSDNHKVAPPKRNAMKNNMEELIHHFKLFSEGYCTTEGEVYVGTEHPKGEFGVYIKSDGANKPYRLKMRAPGFAHISAMDELLSGHMLADTPAIISTIDVVFGDVDR</sequence>
<keyword id="KW-0997">Cell inner membrane</keyword>
<keyword id="KW-1003">Cell membrane</keyword>
<keyword id="KW-0472">Membrane</keyword>
<keyword id="KW-0520">NAD</keyword>
<keyword id="KW-0874">Quinone</keyword>
<keyword id="KW-1278">Translocase</keyword>
<keyword id="KW-0813">Transport</keyword>
<keyword id="KW-0830">Ubiquinone</keyword>
<accession>A4IVZ5</accession>
<gene>
    <name evidence="1" type="primary">nuoD</name>
    <name type="ordered locus">FTW_0109</name>
</gene>
<dbReference type="EC" id="7.1.1.-" evidence="1"/>
<dbReference type="EMBL" id="CP000608">
    <property type="protein sequence ID" value="ABO46097.1"/>
    <property type="molecule type" value="Genomic_DNA"/>
</dbReference>
<dbReference type="RefSeq" id="WP_003018293.1">
    <property type="nucleotide sequence ID" value="NC_009257.1"/>
</dbReference>
<dbReference type="SMR" id="A4IVZ5"/>
<dbReference type="KEGG" id="ftw:FTW_0109"/>
<dbReference type="HOGENOM" id="CLU_015134_1_1_6"/>
<dbReference type="GO" id="GO:0005886">
    <property type="term" value="C:plasma membrane"/>
    <property type="evidence" value="ECO:0007669"/>
    <property type="project" value="UniProtKB-SubCell"/>
</dbReference>
<dbReference type="GO" id="GO:0051287">
    <property type="term" value="F:NAD binding"/>
    <property type="evidence" value="ECO:0007669"/>
    <property type="project" value="InterPro"/>
</dbReference>
<dbReference type="GO" id="GO:0050136">
    <property type="term" value="F:NADH:ubiquinone reductase (non-electrogenic) activity"/>
    <property type="evidence" value="ECO:0007669"/>
    <property type="project" value="UniProtKB-UniRule"/>
</dbReference>
<dbReference type="GO" id="GO:0048038">
    <property type="term" value="F:quinone binding"/>
    <property type="evidence" value="ECO:0007669"/>
    <property type="project" value="UniProtKB-KW"/>
</dbReference>
<dbReference type="FunFam" id="1.10.645.10:FF:000005">
    <property type="entry name" value="NADH-quinone oxidoreductase subunit D"/>
    <property type="match status" value="1"/>
</dbReference>
<dbReference type="Gene3D" id="1.10.645.10">
    <property type="entry name" value="Cytochrome-c3 Hydrogenase, chain B"/>
    <property type="match status" value="1"/>
</dbReference>
<dbReference type="HAMAP" id="MF_01358">
    <property type="entry name" value="NDH1_NuoD"/>
    <property type="match status" value="1"/>
</dbReference>
<dbReference type="InterPro" id="IPR001135">
    <property type="entry name" value="NADH_Q_OxRdtase_suD"/>
</dbReference>
<dbReference type="InterPro" id="IPR014029">
    <property type="entry name" value="NADH_UbQ_OxRdtase_49kDa_CS"/>
</dbReference>
<dbReference type="InterPro" id="IPR022885">
    <property type="entry name" value="NDH1_su_D/H"/>
</dbReference>
<dbReference type="InterPro" id="IPR029014">
    <property type="entry name" value="NiFe-Hase_large"/>
</dbReference>
<dbReference type="NCBIfam" id="TIGR01962">
    <property type="entry name" value="NuoD"/>
    <property type="match status" value="1"/>
</dbReference>
<dbReference type="NCBIfam" id="NF004739">
    <property type="entry name" value="PRK06075.1"/>
    <property type="match status" value="1"/>
</dbReference>
<dbReference type="PANTHER" id="PTHR11993:SF10">
    <property type="entry name" value="NADH DEHYDROGENASE [UBIQUINONE] IRON-SULFUR PROTEIN 2, MITOCHONDRIAL"/>
    <property type="match status" value="1"/>
</dbReference>
<dbReference type="PANTHER" id="PTHR11993">
    <property type="entry name" value="NADH-UBIQUINONE OXIDOREDUCTASE 49 KDA SUBUNIT"/>
    <property type="match status" value="1"/>
</dbReference>
<dbReference type="Pfam" id="PF00346">
    <property type="entry name" value="Complex1_49kDa"/>
    <property type="match status" value="1"/>
</dbReference>
<dbReference type="SUPFAM" id="SSF56762">
    <property type="entry name" value="HydB/Nqo4-like"/>
    <property type="match status" value="1"/>
</dbReference>
<dbReference type="PROSITE" id="PS00535">
    <property type="entry name" value="COMPLEX1_49K"/>
    <property type="match status" value="1"/>
</dbReference>
<proteinExistence type="inferred from homology"/>
<feature type="chain" id="PRO_0000371872" description="NADH-quinone oxidoreductase subunit D">
    <location>
        <begin position="1"/>
        <end position="417"/>
    </location>
</feature>
<name>NUOD_FRATW</name>
<evidence type="ECO:0000255" key="1">
    <source>
        <dbReference type="HAMAP-Rule" id="MF_01358"/>
    </source>
</evidence>
<protein>
    <recommendedName>
        <fullName evidence="1">NADH-quinone oxidoreductase subunit D</fullName>
        <ecNumber evidence="1">7.1.1.-</ecNumber>
    </recommendedName>
    <alternativeName>
        <fullName evidence="1">NADH dehydrogenase I subunit D</fullName>
    </alternativeName>
    <alternativeName>
        <fullName evidence="1">NDH-1 subunit D</fullName>
    </alternativeName>
</protein>
<comment type="function">
    <text evidence="1">NDH-1 shuttles electrons from NADH, via FMN and iron-sulfur (Fe-S) centers, to quinones in the respiratory chain. The immediate electron acceptor for the enzyme in this species is believed to be ubiquinone. Couples the redox reaction to proton translocation (for every two electrons transferred, four hydrogen ions are translocated across the cytoplasmic membrane), and thus conserves the redox energy in a proton gradient.</text>
</comment>
<comment type="catalytic activity">
    <reaction evidence="1">
        <text>a quinone + NADH + 5 H(+)(in) = a quinol + NAD(+) + 4 H(+)(out)</text>
        <dbReference type="Rhea" id="RHEA:57888"/>
        <dbReference type="ChEBI" id="CHEBI:15378"/>
        <dbReference type="ChEBI" id="CHEBI:24646"/>
        <dbReference type="ChEBI" id="CHEBI:57540"/>
        <dbReference type="ChEBI" id="CHEBI:57945"/>
        <dbReference type="ChEBI" id="CHEBI:132124"/>
    </reaction>
</comment>
<comment type="subunit">
    <text evidence="1">NDH-1 is composed of 14 different subunits. Subunits NuoB, C, D, E, F, and G constitute the peripheral sector of the complex.</text>
</comment>
<comment type="subcellular location">
    <subcellularLocation>
        <location evidence="1">Cell inner membrane</location>
        <topology evidence="1">Peripheral membrane protein</topology>
        <orientation evidence="1">Cytoplasmic side</orientation>
    </subcellularLocation>
</comment>
<comment type="similarity">
    <text evidence="1">Belongs to the complex I 49 kDa subunit family.</text>
</comment>
<organism>
    <name type="scientific">Francisella tularensis subsp. tularensis (strain WY96-3418)</name>
    <dbReference type="NCBI Taxonomy" id="418136"/>
    <lineage>
        <taxon>Bacteria</taxon>
        <taxon>Pseudomonadati</taxon>
        <taxon>Pseudomonadota</taxon>
        <taxon>Gammaproteobacteria</taxon>
        <taxon>Thiotrichales</taxon>
        <taxon>Francisellaceae</taxon>
        <taxon>Francisella</taxon>
    </lineage>
</organism>
<reference key="1">
    <citation type="journal article" date="2007" name="PLoS ONE">
        <title>Complete genomic characterization of a pathogenic A.II strain of Francisella tularensis subspecies tularensis.</title>
        <authorList>
            <person name="Beckstrom-Sternberg S.M."/>
            <person name="Auerbach R.K."/>
            <person name="Godbole S."/>
            <person name="Pearson J.V."/>
            <person name="Beckstrom-Sternberg J.S."/>
            <person name="Deng Z."/>
            <person name="Munk C."/>
            <person name="Kubota K."/>
            <person name="Zhou Y."/>
            <person name="Bruce D."/>
            <person name="Noronha J."/>
            <person name="Scheuermann R.H."/>
            <person name="Wang A."/>
            <person name="Wei X."/>
            <person name="Wang J."/>
            <person name="Hao J."/>
            <person name="Wagner D.M."/>
            <person name="Brettin T.S."/>
            <person name="Brown N."/>
            <person name="Gilna P."/>
            <person name="Keim P.S."/>
        </authorList>
    </citation>
    <scope>NUCLEOTIDE SEQUENCE [LARGE SCALE GENOMIC DNA]</scope>
    <source>
        <strain>WY96-3418</strain>
    </source>
</reference>